<accession>C4ZQY5</accession>
<organism>
    <name type="scientific">Escherichia coli (strain K12 / MC4100 / BW2952)</name>
    <dbReference type="NCBI Taxonomy" id="595496"/>
    <lineage>
        <taxon>Bacteria</taxon>
        <taxon>Pseudomonadati</taxon>
        <taxon>Pseudomonadota</taxon>
        <taxon>Gammaproteobacteria</taxon>
        <taxon>Enterobacterales</taxon>
        <taxon>Enterobacteriaceae</taxon>
        <taxon>Escherichia</taxon>
    </lineage>
</organism>
<name>MUG_ECOBW</name>
<keyword id="KW-0963">Cytoplasm</keyword>
<keyword id="KW-0227">DNA damage</keyword>
<keyword id="KW-0228">DNA excision</keyword>
<keyword id="KW-0234">DNA repair</keyword>
<keyword id="KW-0238">DNA-binding</keyword>
<keyword id="KW-0378">Hydrolase</keyword>
<comment type="function">
    <text evidence="1">Excises ethenocytosine and uracil, which can arise by alkylation or deamination of cytosine, respectively, from the corresponding mispairs with guanine in ds-DNA. It is capable of hydrolyzing the carbon-nitrogen bond between the sugar-phosphate backbone of the DNA and the mispaired base. The complementary strand guanine functions in substrate recognition. Required for DNA damage lesion repair in stationary-phase cells.</text>
</comment>
<comment type="catalytic activity">
    <reaction evidence="1">
        <text>Specifically hydrolyzes mismatched double-stranded DNA and polynucleotides, releasing free uracil.</text>
        <dbReference type="EC" id="3.2.2.28"/>
    </reaction>
</comment>
<comment type="subunit">
    <text evidence="1">Binds DNA as a monomer.</text>
</comment>
<comment type="subcellular location">
    <subcellularLocation>
        <location evidence="1">Cytoplasm</location>
    </subcellularLocation>
</comment>
<comment type="similarity">
    <text evidence="1">Belongs to the uracil-DNA glycosylase (UDG) superfamily. TDG/mug family.</text>
</comment>
<protein>
    <recommendedName>
        <fullName evidence="1">G/U mismatch-specific DNA glycosylase</fullName>
        <ecNumber evidence="1">3.2.2.28</ecNumber>
    </recommendedName>
    <alternativeName>
        <fullName evidence="1">Double-strand-specific uracil glycosylase</fullName>
    </alternativeName>
    <alternativeName>
        <fullName evidence="1">Mismatch-specific uracil DNA-glycosylase</fullName>
        <shortName evidence="1">MUG</shortName>
    </alternativeName>
</protein>
<evidence type="ECO:0000255" key="1">
    <source>
        <dbReference type="HAMAP-Rule" id="MF_01956"/>
    </source>
</evidence>
<sequence length="168" mass="18673">MVEDILAPGLRVVFCGINPGLSSAGTGFPFAHPANRFWKVIYQAGFTDRQLKPQEAQHLLDYRCGVTKLVDRPTVQANEVSKQELHAGGRKLIEKIEDYQPQALAILGKQAYEQGFSQRGAQWGKQTLTIGSTQIWVLPNPSGLSRVSLEKLVEAYRELDQALVVRGR</sequence>
<gene>
    <name evidence="1" type="primary">mug</name>
    <name type="ordered locus">BWG_2779</name>
</gene>
<reference key="1">
    <citation type="journal article" date="2009" name="J. Bacteriol.">
        <title>Genomic sequencing reveals regulatory mutations and recombinational events in the widely used MC4100 lineage of Escherichia coli K-12.</title>
        <authorList>
            <person name="Ferenci T."/>
            <person name="Zhou Z."/>
            <person name="Betteridge T."/>
            <person name="Ren Y."/>
            <person name="Liu Y."/>
            <person name="Feng L."/>
            <person name="Reeves P.R."/>
            <person name="Wang L."/>
        </authorList>
    </citation>
    <scope>NUCLEOTIDE SEQUENCE [LARGE SCALE GENOMIC DNA]</scope>
    <source>
        <strain>K12 / MC4100 / BW2952</strain>
    </source>
</reference>
<feature type="chain" id="PRO_1000216208" description="G/U mismatch-specific DNA glycosylase">
    <location>
        <begin position="1"/>
        <end position="168"/>
    </location>
</feature>
<proteinExistence type="inferred from homology"/>
<dbReference type="EC" id="3.2.2.28" evidence="1"/>
<dbReference type="EMBL" id="CP001396">
    <property type="protein sequence ID" value="ACR63261.1"/>
    <property type="molecule type" value="Genomic_DNA"/>
</dbReference>
<dbReference type="RefSeq" id="WP_000228937.1">
    <property type="nucleotide sequence ID" value="NC_012759.1"/>
</dbReference>
<dbReference type="SMR" id="C4ZQY5"/>
<dbReference type="GeneID" id="93778924"/>
<dbReference type="KEGG" id="ebw:BWG_2779"/>
<dbReference type="HOGENOM" id="CLU_042829_3_1_6"/>
<dbReference type="GO" id="GO:0005737">
    <property type="term" value="C:cytoplasm"/>
    <property type="evidence" value="ECO:0007669"/>
    <property type="project" value="UniProtKB-SubCell"/>
</dbReference>
<dbReference type="GO" id="GO:0003677">
    <property type="term" value="F:DNA binding"/>
    <property type="evidence" value="ECO:0007669"/>
    <property type="project" value="UniProtKB-KW"/>
</dbReference>
<dbReference type="GO" id="GO:0008263">
    <property type="term" value="F:pyrimidine-specific mismatch base pair DNA N-glycosylase activity"/>
    <property type="evidence" value="ECO:0007669"/>
    <property type="project" value="UniProtKB-UniRule"/>
</dbReference>
<dbReference type="GO" id="GO:0004844">
    <property type="term" value="F:uracil DNA N-glycosylase activity"/>
    <property type="evidence" value="ECO:0007669"/>
    <property type="project" value="TreeGrafter"/>
</dbReference>
<dbReference type="GO" id="GO:0006285">
    <property type="term" value="P:base-excision repair, AP site formation"/>
    <property type="evidence" value="ECO:0007669"/>
    <property type="project" value="UniProtKB-UniRule"/>
</dbReference>
<dbReference type="CDD" id="cd10028">
    <property type="entry name" value="UDG-F2_TDG_MUG"/>
    <property type="match status" value="1"/>
</dbReference>
<dbReference type="FunFam" id="3.40.470.10:FF:000003">
    <property type="entry name" value="G/U mismatch-specific DNA glycosylase"/>
    <property type="match status" value="1"/>
</dbReference>
<dbReference type="Gene3D" id="3.40.470.10">
    <property type="entry name" value="Uracil-DNA glycosylase-like domain"/>
    <property type="match status" value="1"/>
</dbReference>
<dbReference type="HAMAP" id="MF_01956">
    <property type="entry name" value="MUG"/>
    <property type="match status" value="1"/>
</dbReference>
<dbReference type="InterPro" id="IPR015637">
    <property type="entry name" value="MUG/TDG"/>
</dbReference>
<dbReference type="InterPro" id="IPR023502">
    <property type="entry name" value="MUG_bact"/>
</dbReference>
<dbReference type="InterPro" id="IPR005122">
    <property type="entry name" value="Uracil-DNA_glycosylase-like"/>
</dbReference>
<dbReference type="InterPro" id="IPR036895">
    <property type="entry name" value="Uracil-DNA_glycosylase-like_sf"/>
</dbReference>
<dbReference type="NCBIfam" id="NF007570">
    <property type="entry name" value="PRK10201.1"/>
    <property type="match status" value="1"/>
</dbReference>
<dbReference type="PANTHER" id="PTHR12159">
    <property type="entry name" value="G/T AND G/U MISMATCH-SPECIFIC DNA GLYCOSYLASE"/>
    <property type="match status" value="1"/>
</dbReference>
<dbReference type="PANTHER" id="PTHR12159:SF9">
    <property type="entry name" value="G_T MISMATCH-SPECIFIC THYMINE DNA GLYCOSYLASE"/>
    <property type="match status" value="1"/>
</dbReference>
<dbReference type="Pfam" id="PF03167">
    <property type="entry name" value="UDG"/>
    <property type="match status" value="1"/>
</dbReference>
<dbReference type="SUPFAM" id="SSF52141">
    <property type="entry name" value="Uracil-DNA glycosylase-like"/>
    <property type="match status" value="1"/>
</dbReference>